<keyword id="KW-0028">Amino-acid biosynthesis</keyword>
<keyword id="KW-0057">Aromatic amino acid biosynthesis</keyword>
<keyword id="KW-0274">FAD</keyword>
<keyword id="KW-0285">Flavoprotein</keyword>
<keyword id="KW-0288">FMN</keyword>
<keyword id="KW-0456">Lyase</keyword>
<keyword id="KW-0521">NADP</keyword>
<protein>
    <recommendedName>
        <fullName evidence="1">Chorismate synthase</fullName>
        <shortName evidence="1">CS</shortName>
        <ecNumber evidence="1">4.2.3.5</ecNumber>
    </recommendedName>
    <alternativeName>
        <fullName evidence="1">5-enolpyruvylshikimate-3-phosphate phospholyase</fullName>
    </alternativeName>
</protein>
<feature type="chain" id="PRO_1000132792" description="Chorismate synthase">
    <location>
        <begin position="1"/>
        <end position="388"/>
    </location>
</feature>
<feature type="binding site" evidence="1">
    <location>
        <position position="39"/>
    </location>
    <ligand>
        <name>NADP(+)</name>
        <dbReference type="ChEBI" id="CHEBI:58349"/>
    </ligand>
</feature>
<feature type="binding site" evidence="1">
    <location>
        <position position="45"/>
    </location>
    <ligand>
        <name>NADP(+)</name>
        <dbReference type="ChEBI" id="CHEBI:58349"/>
    </ligand>
</feature>
<feature type="binding site" evidence="1">
    <location>
        <begin position="130"/>
        <end position="132"/>
    </location>
    <ligand>
        <name>FMN</name>
        <dbReference type="ChEBI" id="CHEBI:58210"/>
    </ligand>
</feature>
<feature type="binding site" evidence="1">
    <location>
        <begin position="251"/>
        <end position="252"/>
    </location>
    <ligand>
        <name>FMN</name>
        <dbReference type="ChEBI" id="CHEBI:58210"/>
    </ligand>
</feature>
<feature type="binding site" evidence="1">
    <location>
        <position position="296"/>
    </location>
    <ligand>
        <name>FMN</name>
        <dbReference type="ChEBI" id="CHEBI:58210"/>
    </ligand>
</feature>
<feature type="binding site" evidence="1">
    <location>
        <begin position="311"/>
        <end position="315"/>
    </location>
    <ligand>
        <name>FMN</name>
        <dbReference type="ChEBI" id="CHEBI:58210"/>
    </ligand>
</feature>
<feature type="binding site" evidence="1">
    <location>
        <position position="337"/>
    </location>
    <ligand>
        <name>FMN</name>
        <dbReference type="ChEBI" id="CHEBI:58210"/>
    </ligand>
</feature>
<reference key="1">
    <citation type="journal article" date="2010" name="Genome Biol.">
        <title>Structure and dynamics of the pan-genome of Streptococcus pneumoniae and closely related species.</title>
        <authorList>
            <person name="Donati C."/>
            <person name="Hiller N.L."/>
            <person name="Tettelin H."/>
            <person name="Muzzi A."/>
            <person name="Croucher N.J."/>
            <person name="Angiuoli S.V."/>
            <person name="Oggioni M."/>
            <person name="Dunning Hotopp J.C."/>
            <person name="Hu F.Z."/>
            <person name="Riley D.R."/>
            <person name="Covacci A."/>
            <person name="Mitchell T.J."/>
            <person name="Bentley S.D."/>
            <person name="Kilian M."/>
            <person name="Ehrlich G.D."/>
            <person name="Rappuoli R."/>
            <person name="Moxon E.R."/>
            <person name="Masignani V."/>
        </authorList>
    </citation>
    <scope>NUCLEOTIDE SEQUENCE [LARGE SCALE GENOMIC DNA]</scope>
    <source>
        <strain>JJA</strain>
    </source>
</reference>
<sequence length="388" mass="42845">MRYLTAGESHGPRLTAIIEGIPAGLPLTAEDINEDLRRRQGGYGRGGRMKIESDQVVFTSGVRHGKTTGAPITMDVINKDHQKWLDIMSAEDIEDRLKSKRKITHPRPGHADLVGGIKYRFDDLRNSLERSSARETTMRVAVGAVAKRLLAELDMEIANHVVVFGGKEIDVPENLTVAEIKQRAAQSEVSIVNQEREQEIKDYIDQIKRDGDTIGGVVETVVGGVPVGLGSYVQWDRKLDARLAQAVVSINAFKGVEFGLGFEAGYRKGSQVMDEILWSKEDGYTRRTNNLGGFEGGMTNGQPIVVRGVMKPIPTLYKPLMSVDIETHEPYKATVERSDPTALPAAGMVMEAVVATVLAQEILEKFSSDNLEELKEAVAKHRDYTKNY</sequence>
<comment type="function">
    <text evidence="1">Catalyzes the anti-1,4-elimination of the C-3 phosphate and the C-6 proR hydrogen from 5-enolpyruvylshikimate-3-phosphate (EPSP) to yield chorismate, which is the branch point compound that serves as the starting substrate for the three terminal pathways of aromatic amino acid biosynthesis. This reaction introduces a second double bond into the aromatic ring system.</text>
</comment>
<comment type="catalytic activity">
    <reaction evidence="1">
        <text>5-O-(1-carboxyvinyl)-3-phosphoshikimate = chorismate + phosphate</text>
        <dbReference type="Rhea" id="RHEA:21020"/>
        <dbReference type="ChEBI" id="CHEBI:29748"/>
        <dbReference type="ChEBI" id="CHEBI:43474"/>
        <dbReference type="ChEBI" id="CHEBI:57701"/>
        <dbReference type="EC" id="4.2.3.5"/>
    </reaction>
</comment>
<comment type="cofactor">
    <cofactor evidence="1">
        <name>FMNH2</name>
        <dbReference type="ChEBI" id="CHEBI:57618"/>
    </cofactor>
    <text evidence="1">Reduced FMN (FMNH(2)).</text>
</comment>
<comment type="pathway">
    <text evidence="1">Metabolic intermediate biosynthesis; chorismate biosynthesis; chorismate from D-erythrose 4-phosphate and phosphoenolpyruvate: step 7/7.</text>
</comment>
<comment type="subunit">
    <text evidence="1">Homotetramer.</text>
</comment>
<comment type="similarity">
    <text evidence="1">Belongs to the chorismate synthase family.</text>
</comment>
<organism>
    <name type="scientific">Streptococcus pneumoniae (strain JJA)</name>
    <dbReference type="NCBI Taxonomy" id="488222"/>
    <lineage>
        <taxon>Bacteria</taxon>
        <taxon>Bacillati</taxon>
        <taxon>Bacillota</taxon>
        <taxon>Bacilli</taxon>
        <taxon>Lactobacillales</taxon>
        <taxon>Streptococcaceae</taxon>
        <taxon>Streptococcus</taxon>
    </lineage>
</organism>
<accession>C1CEW3</accession>
<proteinExistence type="inferred from homology"/>
<gene>
    <name evidence="1" type="primary">aroC</name>
    <name type="ordered locus">SPJ_1274</name>
</gene>
<evidence type="ECO:0000255" key="1">
    <source>
        <dbReference type="HAMAP-Rule" id="MF_00300"/>
    </source>
</evidence>
<dbReference type="EC" id="4.2.3.5" evidence="1"/>
<dbReference type="EMBL" id="CP000919">
    <property type="protein sequence ID" value="ACO18209.1"/>
    <property type="molecule type" value="Genomic_DNA"/>
</dbReference>
<dbReference type="RefSeq" id="WP_001269866.1">
    <property type="nucleotide sequence ID" value="NC_012466.1"/>
</dbReference>
<dbReference type="SMR" id="C1CEW3"/>
<dbReference type="KEGG" id="sjj:SPJ_1274"/>
<dbReference type="HOGENOM" id="CLU_034547_2_0_9"/>
<dbReference type="UniPathway" id="UPA00053">
    <property type="reaction ID" value="UER00090"/>
</dbReference>
<dbReference type="Proteomes" id="UP000002206">
    <property type="component" value="Chromosome"/>
</dbReference>
<dbReference type="GO" id="GO:0005829">
    <property type="term" value="C:cytosol"/>
    <property type="evidence" value="ECO:0007669"/>
    <property type="project" value="TreeGrafter"/>
</dbReference>
<dbReference type="GO" id="GO:0004107">
    <property type="term" value="F:chorismate synthase activity"/>
    <property type="evidence" value="ECO:0007669"/>
    <property type="project" value="UniProtKB-UniRule"/>
</dbReference>
<dbReference type="GO" id="GO:0010181">
    <property type="term" value="F:FMN binding"/>
    <property type="evidence" value="ECO:0007669"/>
    <property type="project" value="TreeGrafter"/>
</dbReference>
<dbReference type="GO" id="GO:0008652">
    <property type="term" value="P:amino acid biosynthetic process"/>
    <property type="evidence" value="ECO:0007669"/>
    <property type="project" value="UniProtKB-KW"/>
</dbReference>
<dbReference type="GO" id="GO:0009073">
    <property type="term" value="P:aromatic amino acid family biosynthetic process"/>
    <property type="evidence" value="ECO:0007669"/>
    <property type="project" value="UniProtKB-KW"/>
</dbReference>
<dbReference type="GO" id="GO:0009423">
    <property type="term" value="P:chorismate biosynthetic process"/>
    <property type="evidence" value="ECO:0007669"/>
    <property type="project" value="UniProtKB-UniRule"/>
</dbReference>
<dbReference type="CDD" id="cd07304">
    <property type="entry name" value="Chorismate_synthase"/>
    <property type="match status" value="1"/>
</dbReference>
<dbReference type="FunFam" id="3.60.150.10:FF:000002">
    <property type="entry name" value="Chorismate synthase"/>
    <property type="match status" value="1"/>
</dbReference>
<dbReference type="Gene3D" id="3.60.150.10">
    <property type="entry name" value="Chorismate synthase AroC"/>
    <property type="match status" value="1"/>
</dbReference>
<dbReference type="HAMAP" id="MF_00300">
    <property type="entry name" value="Chorismate_synth"/>
    <property type="match status" value="1"/>
</dbReference>
<dbReference type="InterPro" id="IPR000453">
    <property type="entry name" value="Chorismate_synth"/>
</dbReference>
<dbReference type="InterPro" id="IPR035904">
    <property type="entry name" value="Chorismate_synth_AroC_sf"/>
</dbReference>
<dbReference type="InterPro" id="IPR020541">
    <property type="entry name" value="Chorismate_synthase_CS"/>
</dbReference>
<dbReference type="NCBIfam" id="TIGR00033">
    <property type="entry name" value="aroC"/>
    <property type="match status" value="1"/>
</dbReference>
<dbReference type="NCBIfam" id="NF003793">
    <property type="entry name" value="PRK05382.1"/>
    <property type="match status" value="1"/>
</dbReference>
<dbReference type="PANTHER" id="PTHR21085">
    <property type="entry name" value="CHORISMATE SYNTHASE"/>
    <property type="match status" value="1"/>
</dbReference>
<dbReference type="PANTHER" id="PTHR21085:SF0">
    <property type="entry name" value="CHORISMATE SYNTHASE"/>
    <property type="match status" value="1"/>
</dbReference>
<dbReference type="Pfam" id="PF01264">
    <property type="entry name" value="Chorismate_synt"/>
    <property type="match status" value="1"/>
</dbReference>
<dbReference type="PIRSF" id="PIRSF001456">
    <property type="entry name" value="Chorismate_synth"/>
    <property type="match status" value="1"/>
</dbReference>
<dbReference type="SUPFAM" id="SSF103263">
    <property type="entry name" value="Chorismate synthase, AroC"/>
    <property type="match status" value="1"/>
</dbReference>
<dbReference type="PROSITE" id="PS00787">
    <property type="entry name" value="CHORISMATE_SYNTHASE_1"/>
    <property type="match status" value="1"/>
</dbReference>
<dbReference type="PROSITE" id="PS00788">
    <property type="entry name" value="CHORISMATE_SYNTHASE_2"/>
    <property type="match status" value="1"/>
</dbReference>
<dbReference type="PROSITE" id="PS00789">
    <property type="entry name" value="CHORISMATE_SYNTHASE_3"/>
    <property type="match status" value="1"/>
</dbReference>
<name>AROC_STRZJ</name>